<dbReference type="EC" id="2.8.1.8" evidence="1"/>
<dbReference type="EMBL" id="Z46381">
    <property type="protein sequence ID" value="CAA86516.1"/>
    <property type="molecule type" value="Genomic_DNA"/>
</dbReference>
<dbReference type="PIR" id="T23655">
    <property type="entry name" value="T23655"/>
</dbReference>
<dbReference type="RefSeq" id="NP_497722.3">
    <property type="nucleotide sequence ID" value="NM_065321.6"/>
</dbReference>
<dbReference type="SMR" id="Q21452"/>
<dbReference type="BioGRID" id="532131">
    <property type="interactions" value="10"/>
</dbReference>
<dbReference type="FunCoup" id="Q21452">
    <property type="interactions" value="2819"/>
</dbReference>
<dbReference type="STRING" id="6239.M01F1.3.3"/>
<dbReference type="PaxDb" id="6239-M01F1.3.1"/>
<dbReference type="PeptideAtlas" id="Q21452"/>
<dbReference type="EnsemblMetazoa" id="M01F1.3.1">
    <property type="protein sequence ID" value="M01F1.3.1"/>
    <property type="gene ID" value="WBGene00010809"/>
</dbReference>
<dbReference type="EnsemblMetazoa" id="M01F1.3.2">
    <property type="protein sequence ID" value="M01F1.3.2"/>
    <property type="gene ID" value="WBGene00010809"/>
</dbReference>
<dbReference type="GeneID" id="3564813"/>
<dbReference type="KEGG" id="cel:CELE_M01F1.3"/>
<dbReference type="UCSC" id="M01F1.3.1">
    <property type="organism name" value="c. elegans"/>
</dbReference>
<dbReference type="AGR" id="WB:WBGene00010809"/>
<dbReference type="CTD" id="3564813"/>
<dbReference type="WormBase" id="M01F1.3">
    <property type="protein sequence ID" value="CE01031"/>
    <property type="gene ID" value="WBGene00010809"/>
    <property type="gene designation" value="lias-1"/>
</dbReference>
<dbReference type="eggNOG" id="KOG2672">
    <property type="taxonomic scope" value="Eukaryota"/>
</dbReference>
<dbReference type="GeneTree" id="ENSGT00390000006234"/>
<dbReference type="HOGENOM" id="CLU_033144_1_2_1"/>
<dbReference type="InParanoid" id="Q21452"/>
<dbReference type="OMA" id="PYCDIDF"/>
<dbReference type="OrthoDB" id="3231at2759"/>
<dbReference type="PhylomeDB" id="Q21452"/>
<dbReference type="UniPathway" id="UPA00538">
    <property type="reaction ID" value="UER00593"/>
</dbReference>
<dbReference type="PRO" id="PR:Q21452"/>
<dbReference type="Proteomes" id="UP000001940">
    <property type="component" value="Chromosome III"/>
</dbReference>
<dbReference type="Bgee" id="WBGene00010809">
    <property type="expression patterns" value="Expressed in larva and 4 other cell types or tissues"/>
</dbReference>
<dbReference type="GO" id="GO:0005739">
    <property type="term" value="C:mitochondrion"/>
    <property type="evidence" value="ECO:0000318"/>
    <property type="project" value="GO_Central"/>
</dbReference>
<dbReference type="GO" id="GO:0051539">
    <property type="term" value="F:4 iron, 4 sulfur cluster binding"/>
    <property type="evidence" value="ECO:0007669"/>
    <property type="project" value="UniProtKB-UniRule"/>
</dbReference>
<dbReference type="GO" id="GO:0016992">
    <property type="term" value="F:lipoate synthase activity"/>
    <property type="evidence" value="ECO:0000318"/>
    <property type="project" value="GO_Central"/>
</dbReference>
<dbReference type="GO" id="GO:0046872">
    <property type="term" value="F:metal ion binding"/>
    <property type="evidence" value="ECO:0007669"/>
    <property type="project" value="UniProtKB-KW"/>
</dbReference>
<dbReference type="GO" id="GO:0009107">
    <property type="term" value="P:lipoate biosynthetic process"/>
    <property type="evidence" value="ECO:0000318"/>
    <property type="project" value="GO_Central"/>
</dbReference>
<dbReference type="CDD" id="cd01335">
    <property type="entry name" value="Radical_SAM"/>
    <property type="match status" value="1"/>
</dbReference>
<dbReference type="FunFam" id="3.20.20.70:FF:000036">
    <property type="entry name" value="Lipoyl synthase, mitochondrial"/>
    <property type="match status" value="1"/>
</dbReference>
<dbReference type="Gene3D" id="3.20.20.70">
    <property type="entry name" value="Aldolase class I"/>
    <property type="match status" value="1"/>
</dbReference>
<dbReference type="HAMAP" id="MF_00206">
    <property type="entry name" value="Lipoyl_synth"/>
    <property type="match status" value="1"/>
</dbReference>
<dbReference type="InterPro" id="IPR013785">
    <property type="entry name" value="Aldolase_TIM"/>
</dbReference>
<dbReference type="InterPro" id="IPR006638">
    <property type="entry name" value="Elp3/MiaA/NifB-like_rSAM"/>
</dbReference>
<dbReference type="InterPro" id="IPR031691">
    <property type="entry name" value="LIAS_N"/>
</dbReference>
<dbReference type="InterPro" id="IPR003698">
    <property type="entry name" value="Lipoyl_synth"/>
</dbReference>
<dbReference type="InterPro" id="IPR007197">
    <property type="entry name" value="rSAM"/>
</dbReference>
<dbReference type="NCBIfam" id="TIGR00510">
    <property type="entry name" value="lipA"/>
    <property type="match status" value="1"/>
</dbReference>
<dbReference type="NCBIfam" id="NF004019">
    <property type="entry name" value="PRK05481.1"/>
    <property type="match status" value="1"/>
</dbReference>
<dbReference type="NCBIfam" id="NF009544">
    <property type="entry name" value="PRK12928.1"/>
    <property type="match status" value="1"/>
</dbReference>
<dbReference type="PANTHER" id="PTHR10949">
    <property type="entry name" value="LIPOYL SYNTHASE"/>
    <property type="match status" value="1"/>
</dbReference>
<dbReference type="PANTHER" id="PTHR10949:SF0">
    <property type="entry name" value="LIPOYL SYNTHASE, MITOCHONDRIAL"/>
    <property type="match status" value="1"/>
</dbReference>
<dbReference type="Pfam" id="PF16881">
    <property type="entry name" value="LIAS_N"/>
    <property type="match status" value="1"/>
</dbReference>
<dbReference type="Pfam" id="PF04055">
    <property type="entry name" value="Radical_SAM"/>
    <property type="match status" value="1"/>
</dbReference>
<dbReference type="PIRSF" id="PIRSF005963">
    <property type="entry name" value="Lipoyl_synth"/>
    <property type="match status" value="1"/>
</dbReference>
<dbReference type="SFLD" id="SFLDF00271">
    <property type="entry name" value="lipoyl_synthase"/>
    <property type="match status" value="1"/>
</dbReference>
<dbReference type="SFLD" id="SFLDS00029">
    <property type="entry name" value="Radical_SAM"/>
    <property type="match status" value="1"/>
</dbReference>
<dbReference type="SMART" id="SM00729">
    <property type="entry name" value="Elp3"/>
    <property type="match status" value="1"/>
</dbReference>
<dbReference type="SUPFAM" id="SSF102114">
    <property type="entry name" value="Radical SAM enzymes"/>
    <property type="match status" value="1"/>
</dbReference>
<dbReference type="PROSITE" id="PS51918">
    <property type="entry name" value="RADICAL_SAM"/>
    <property type="match status" value="1"/>
</dbReference>
<reference key="1">
    <citation type="journal article" date="1998" name="Science">
        <title>Genome sequence of the nematode C. elegans: a platform for investigating biology.</title>
        <authorList>
            <consortium name="The C. elegans sequencing consortium"/>
        </authorList>
    </citation>
    <scope>NUCLEOTIDE SEQUENCE [LARGE SCALE GENOMIC DNA]</scope>
    <source>
        <strain>Bristol N2</strain>
    </source>
</reference>
<organism>
    <name type="scientific">Caenorhabditis elegans</name>
    <dbReference type="NCBI Taxonomy" id="6239"/>
    <lineage>
        <taxon>Eukaryota</taxon>
        <taxon>Metazoa</taxon>
        <taxon>Ecdysozoa</taxon>
        <taxon>Nematoda</taxon>
        <taxon>Chromadorea</taxon>
        <taxon>Rhabditida</taxon>
        <taxon>Rhabditina</taxon>
        <taxon>Rhabditomorpha</taxon>
        <taxon>Rhabditoidea</taxon>
        <taxon>Rhabditidae</taxon>
        <taxon>Peloderinae</taxon>
        <taxon>Caenorhabditis</taxon>
    </lineage>
</organism>
<comment type="function">
    <text evidence="1">Catalyzes the radical-mediated insertion of two sulfur atoms into the C-6 and C-8 positions of the octanoyl moiety bound to the lipoyl domains of lipoate-dependent enzymes, thereby converting the octanoylated domains into lipoylated derivatives.</text>
</comment>
<comment type="catalytic activity">
    <reaction evidence="1">
        <text>[[Fe-S] cluster scaffold protein carrying a second [4Fe-4S](2+) cluster] + N(6)-octanoyl-L-lysyl-[protein] + 2 oxidized [2Fe-2S]-[ferredoxin] + 2 S-adenosyl-L-methionine + 4 H(+) = [[Fe-S] cluster scaffold protein] + N(6)-[(R)-dihydrolipoyl]-L-lysyl-[protein] + 4 Fe(3+) + 2 hydrogen sulfide + 2 5'-deoxyadenosine + 2 L-methionine + 2 reduced [2Fe-2S]-[ferredoxin]</text>
        <dbReference type="Rhea" id="RHEA:16585"/>
        <dbReference type="Rhea" id="RHEA-COMP:9928"/>
        <dbReference type="Rhea" id="RHEA-COMP:10000"/>
        <dbReference type="Rhea" id="RHEA-COMP:10001"/>
        <dbReference type="Rhea" id="RHEA-COMP:10475"/>
        <dbReference type="Rhea" id="RHEA-COMP:14568"/>
        <dbReference type="Rhea" id="RHEA-COMP:14569"/>
        <dbReference type="ChEBI" id="CHEBI:15378"/>
        <dbReference type="ChEBI" id="CHEBI:17319"/>
        <dbReference type="ChEBI" id="CHEBI:29034"/>
        <dbReference type="ChEBI" id="CHEBI:29919"/>
        <dbReference type="ChEBI" id="CHEBI:33722"/>
        <dbReference type="ChEBI" id="CHEBI:33737"/>
        <dbReference type="ChEBI" id="CHEBI:33738"/>
        <dbReference type="ChEBI" id="CHEBI:57844"/>
        <dbReference type="ChEBI" id="CHEBI:59789"/>
        <dbReference type="ChEBI" id="CHEBI:78809"/>
        <dbReference type="ChEBI" id="CHEBI:83100"/>
        <dbReference type="EC" id="2.8.1.8"/>
    </reaction>
</comment>
<comment type="cofactor">
    <cofactor evidence="1">
        <name>[4Fe-4S] cluster</name>
        <dbReference type="ChEBI" id="CHEBI:49883"/>
    </cofactor>
    <text evidence="1">Binds 2 [4Fe-4S] clusters per subunit. One cluster is coordinated with 3 cysteines and an exchangeable S-adenosyl-L-methionine.</text>
</comment>
<comment type="pathway">
    <text evidence="1">Protein modification; protein lipoylation via endogenous pathway; protein N(6)-(lipoyl)lysine from octanoyl-[acyl-carrier-protein]: step 2/2.</text>
</comment>
<comment type="subcellular location">
    <subcellularLocation>
        <location evidence="1">Mitochondrion</location>
    </subcellularLocation>
</comment>
<comment type="miscellaneous">
    <text evidence="1">This protein may be expected to contain an N-terminal transit peptide but none has been predicted.</text>
</comment>
<comment type="similarity">
    <text evidence="1">Belongs to the radical SAM superfamily. Lipoyl synthase family.</text>
</comment>
<feature type="chain" id="PRO_0000398228" description="Lipoyl synthase, mitochondrial">
    <location>
        <begin position="1"/>
        <end position="354"/>
    </location>
</feature>
<feature type="domain" description="Radical SAM core" evidence="2">
    <location>
        <begin position="107"/>
        <end position="326"/>
    </location>
</feature>
<feature type="binding site" evidence="1">
    <location>
        <position position="91"/>
    </location>
    <ligand>
        <name>[4Fe-4S] cluster</name>
        <dbReference type="ChEBI" id="CHEBI:49883"/>
        <label>1</label>
    </ligand>
</feature>
<feature type="binding site" evidence="1">
    <location>
        <position position="96"/>
    </location>
    <ligand>
        <name>[4Fe-4S] cluster</name>
        <dbReference type="ChEBI" id="CHEBI:49883"/>
        <label>1</label>
    </ligand>
</feature>
<feature type="binding site" evidence="1">
    <location>
        <position position="102"/>
    </location>
    <ligand>
        <name>[4Fe-4S] cluster</name>
        <dbReference type="ChEBI" id="CHEBI:49883"/>
        <label>1</label>
    </ligand>
</feature>
<feature type="binding site" evidence="1">
    <location>
        <position position="122"/>
    </location>
    <ligand>
        <name>[4Fe-4S] cluster</name>
        <dbReference type="ChEBI" id="CHEBI:49883"/>
        <label>2</label>
        <note>4Fe-4S-S-AdoMet</note>
    </ligand>
</feature>
<feature type="binding site" evidence="1">
    <location>
        <position position="126"/>
    </location>
    <ligand>
        <name>[4Fe-4S] cluster</name>
        <dbReference type="ChEBI" id="CHEBI:49883"/>
        <label>2</label>
        <note>4Fe-4S-S-AdoMet</note>
    </ligand>
</feature>
<feature type="binding site" evidence="1">
    <location>
        <position position="129"/>
    </location>
    <ligand>
        <name>[4Fe-4S] cluster</name>
        <dbReference type="ChEBI" id="CHEBI:49883"/>
        <label>2</label>
        <note>4Fe-4S-S-AdoMet</note>
    </ligand>
</feature>
<feature type="binding site" evidence="1">
    <location>
        <position position="337"/>
    </location>
    <ligand>
        <name>[4Fe-4S] cluster</name>
        <dbReference type="ChEBI" id="CHEBI:49883"/>
        <label>1</label>
    </ligand>
</feature>
<evidence type="ECO:0000255" key="1">
    <source>
        <dbReference type="HAMAP-Rule" id="MF_03123"/>
    </source>
</evidence>
<evidence type="ECO:0000255" key="2">
    <source>
        <dbReference type="PROSITE-ProRule" id="PRU01266"/>
    </source>
</evidence>
<evidence type="ECO:0000312" key="3">
    <source>
        <dbReference type="WormBase" id="M01F1.3"/>
    </source>
</evidence>
<sequence>MLARVWVRGLAATKKKPQVLVKDGPSLQDFISSASVAEAVEKYEGKLKLEKGDRRLRLPPWLKKEKILPSENENVSRLKKQLKHLKLATVCQEARCPNLGECWGGSDDSLATATIMLMGDTCTRGCKFCSVKTARAPPPLDPMEPENTSTAVASWGVEYIVLTSVDRDDLPDGGADHLRKTVQLMKLKKPELLIECLLPDFAGDKISVEKMATSGLDVYAHNIETVERLTPWVRDPRAKYRQSLDALRYAKEVSPKLITKTSIMLGLGEAEDEIKQCLADLRASNVDVVTFGQYMQPTKRHLLVKEWVTPEKFDQWAEYSKKLGFLYVASGPLVRSSYKAGEFYLKNVLRNRQN</sequence>
<keyword id="KW-0004">4Fe-4S</keyword>
<keyword id="KW-0408">Iron</keyword>
<keyword id="KW-0411">Iron-sulfur</keyword>
<keyword id="KW-0479">Metal-binding</keyword>
<keyword id="KW-0496">Mitochondrion</keyword>
<keyword id="KW-1185">Reference proteome</keyword>
<keyword id="KW-0949">S-adenosyl-L-methionine</keyword>
<keyword id="KW-0808">Transferase</keyword>
<protein>
    <recommendedName>
        <fullName evidence="1">Lipoyl synthase, mitochondrial</fullName>
        <ecNumber evidence="1">2.8.1.8</ecNumber>
    </recommendedName>
    <alternativeName>
        <fullName evidence="1">Lipoate synthase</fullName>
        <shortName evidence="1">LS</shortName>
        <shortName evidence="1">Lip-syn</shortName>
    </alternativeName>
    <alternativeName>
        <fullName evidence="1">Lipoic acid synthase</fullName>
    </alternativeName>
</protein>
<name>LIAS_CAEEL</name>
<proteinExistence type="inferred from homology"/>
<gene>
    <name evidence="3" type="primary">lias-1</name>
    <name type="ORF">M01F1.3</name>
</gene>
<accession>Q21452</accession>